<reference key="1">
    <citation type="journal article" date="1988" name="J. Bacteriol.">
        <title>Cloning and complete nucleotide sequences of the type II restriction-modification genes of Salmonella infantis.</title>
        <authorList>
            <person name="Karreman C."/>
            <person name="de Waard A."/>
        </authorList>
    </citation>
    <scope>NUCLEOTIDE SEQUENCE [GENOMIC DNA]</scope>
    <scope>FUNCTION</scope>
</reference>
<reference key="2">
    <citation type="journal article" date="2003" name="Nucleic Acids Res.">
        <title>A nomenclature for restriction enzymes, DNA methyltransferases, homing endonucleases and their genes.</title>
        <authorList>
            <person name="Roberts R.J."/>
            <person name="Belfort M."/>
            <person name="Bestor T."/>
            <person name="Bhagwat A.S."/>
            <person name="Bickle T.A."/>
            <person name="Bitinaite J."/>
            <person name="Blumenthal R.M."/>
            <person name="Degtyarev S.K."/>
            <person name="Dryden D.T."/>
            <person name="Dybvig K."/>
            <person name="Firman K."/>
            <person name="Gromova E.S."/>
            <person name="Gumport R.I."/>
            <person name="Halford S.E."/>
            <person name="Hattman S."/>
            <person name="Heitman J."/>
            <person name="Hornby D.P."/>
            <person name="Janulaitis A."/>
            <person name="Jeltsch A."/>
            <person name="Josephsen J."/>
            <person name="Kiss A."/>
            <person name="Klaenhammer T.R."/>
            <person name="Kobayashi I."/>
            <person name="Kong H."/>
            <person name="Krueger D.H."/>
            <person name="Lacks S."/>
            <person name="Marinus M.G."/>
            <person name="Miyahara M."/>
            <person name="Morgan R.D."/>
            <person name="Murray N.E."/>
            <person name="Nagaraja V."/>
            <person name="Piekarowicz A."/>
            <person name="Pingoud A."/>
            <person name="Raleigh E."/>
            <person name="Rao D.N."/>
            <person name="Reich N."/>
            <person name="Repin V.E."/>
            <person name="Selker E.U."/>
            <person name="Shaw P.C."/>
            <person name="Stein D.C."/>
            <person name="Stoddard B.L."/>
            <person name="Szybalski W."/>
            <person name="Trautner T.A."/>
            <person name="Van Etten J.L."/>
            <person name="Vitor J.M."/>
            <person name="Wilson G.G."/>
            <person name="Xu S.Y."/>
        </authorList>
    </citation>
    <scope>NOMENCLATURE</scope>
    <scope>SUBTYPE</scope>
</reference>
<dbReference type="EC" id="3.1.21.4"/>
<dbReference type="EMBL" id="J03391">
    <property type="protein sequence ID" value="AAA27213.1"/>
    <property type="molecule type" value="Genomic_DNA"/>
</dbReference>
<dbReference type="RefSeq" id="WP_023214691.1">
    <property type="nucleotide sequence ID" value="NZ_WACL01000006.1"/>
</dbReference>
<dbReference type="SMR" id="P09796"/>
<dbReference type="REBASE" id="1687">
    <property type="entry name" value="SinI"/>
</dbReference>
<dbReference type="PATRIC" id="fig|595.18.peg.4607"/>
<dbReference type="PRO" id="PR:P09796"/>
<dbReference type="GO" id="GO:0003677">
    <property type="term" value="F:DNA binding"/>
    <property type="evidence" value="ECO:0007669"/>
    <property type="project" value="InterPro"/>
</dbReference>
<dbReference type="GO" id="GO:0009036">
    <property type="term" value="F:type II site-specific deoxyribonuclease activity"/>
    <property type="evidence" value="ECO:0007669"/>
    <property type="project" value="UniProtKB-EC"/>
</dbReference>
<dbReference type="GO" id="GO:0009307">
    <property type="term" value="P:DNA restriction-modification system"/>
    <property type="evidence" value="ECO:0007669"/>
    <property type="project" value="UniProtKB-KW"/>
</dbReference>
<dbReference type="InterPro" id="IPR019070">
    <property type="entry name" value="Restrct_endonuc_II_SinI"/>
</dbReference>
<dbReference type="Pfam" id="PF09570">
    <property type="entry name" value="RE_SinI"/>
    <property type="match status" value="1"/>
</dbReference>
<proteinExistence type="predicted"/>
<gene>
    <name type="primary">sinIR</name>
</gene>
<organism>
    <name type="scientific">Salmonella infantis</name>
    <dbReference type="NCBI Taxonomy" id="595"/>
    <lineage>
        <taxon>Bacteria</taxon>
        <taxon>Pseudomonadati</taxon>
        <taxon>Pseudomonadota</taxon>
        <taxon>Gammaproteobacteria</taxon>
        <taxon>Enterobacterales</taxon>
        <taxon>Enterobacteriaceae</taxon>
        <taxon>Salmonella</taxon>
    </lineage>
</organism>
<accession>P09796</accession>
<name>T2S1_SALIN</name>
<sequence length="230" mass="26870">MSEAVFFVENAEELAKQKMDNINPELSEKFQLLIKFLSRFPESCSNPRSKQVRKNFGKAEHIEYLAQNFNESRLPKKPTPPTTIPDEVVSLVLNVSFDIPQENLNRIKEEHRLSMASENIVGDLLERYLAEKLEPCGWIWCSGTSVKAVDFIHYDNEKDEWGLLQVKNRDNTENSSSSKIRDNTPIKKWFRTFSQRDATNWENFPDEVSSKDLNEDDFRAFVESYLRKIK</sequence>
<comment type="function">
    <text evidence="1 2">A P subtype restriction enzyme that recognizes the double-stranded sequence 5'-GGWCC-3' and cleaves after G-1.</text>
</comment>
<comment type="catalytic activity">
    <reaction>
        <text>Endonucleolytic cleavage of DNA to give specific double-stranded fragments with terminal 5'-phosphates.</text>
        <dbReference type="EC" id="3.1.21.4"/>
    </reaction>
</comment>
<keyword id="KW-0255">Endonuclease</keyword>
<keyword id="KW-0378">Hydrolase</keyword>
<keyword id="KW-0540">Nuclease</keyword>
<keyword id="KW-0680">Restriction system</keyword>
<protein>
    <recommendedName>
        <fullName evidence="2">Type II restriction enzyme SinI</fullName>
        <shortName evidence="3">R.SinI</shortName>
        <ecNumber>3.1.21.4</ecNumber>
    </recommendedName>
    <alternativeName>
        <fullName>Endonuclease SinI</fullName>
    </alternativeName>
    <alternativeName>
        <fullName>Type-2 restriction enzyme SinI</fullName>
    </alternativeName>
</protein>
<evidence type="ECO:0000269" key="1">
    <source>
    </source>
</evidence>
<evidence type="ECO:0000303" key="2">
    <source>
    </source>
</evidence>
<evidence type="ECO:0000303" key="3">
    <source>
    </source>
</evidence>
<feature type="chain" id="PRO_0000077361" description="Type II restriction enzyme SinI">
    <location>
        <begin position="1"/>
        <end position="230"/>
    </location>
</feature>